<keyword id="KW-0028">Amino-acid biosynthesis</keyword>
<keyword id="KW-0055">Arginine biosynthesis</keyword>
<keyword id="KW-0067">ATP-binding</keyword>
<keyword id="KW-0963">Cytoplasm</keyword>
<keyword id="KW-0436">Ligase</keyword>
<keyword id="KW-0547">Nucleotide-binding</keyword>
<keyword id="KW-1185">Reference proteome</keyword>
<gene>
    <name evidence="1" type="primary">argG</name>
    <name type="ordered locus">GK2757</name>
</gene>
<comment type="catalytic activity">
    <reaction evidence="1">
        <text>L-citrulline + L-aspartate + ATP = 2-(N(omega)-L-arginino)succinate + AMP + diphosphate + H(+)</text>
        <dbReference type="Rhea" id="RHEA:10932"/>
        <dbReference type="ChEBI" id="CHEBI:15378"/>
        <dbReference type="ChEBI" id="CHEBI:29991"/>
        <dbReference type="ChEBI" id="CHEBI:30616"/>
        <dbReference type="ChEBI" id="CHEBI:33019"/>
        <dbReference type="ChEBI" id="CHEBI:57472"/>
        <dbReference type="ChEBI" id="CHEBI:57743"/>
        <dbReference type="ChEBI" id="CHEBI:456215"/>
        <dbReference type="EC" id="6.3.4.5"/>
    </reaction>
</comment>
<comment type="pathway">
    <text evidence="1">Amino-acid biosynthesis; L-arginine biosynthesis; L-arginine from L-ornithine and carbamoyl phosphate: step 2/3.</text>
</comment>
<comment type="subunit">
    <text evidence="1">Homotetramer.</text>
</comment>
<comment type="subcellular location">
    <subcellularLocation>
        <location evidence="1">Cytoplasm</location>
    </subcellularLocation>
</comment>
<comment type="similarity">
    <text evidence="1">Belongs to the argininosuccinate synthase family. Type 1 subfamily.</text>
</comment>
<feature type="chain" id="PRO_0000148594" description="Argininosuccinate synthase">
    <location>
        <begin position="1"/>
        <end position="406"/>
    </location>
</feature>
<feature type="binding site" evidence="1">
    <location>
        <begin position="9"/>
        <end position="17"/>
    </location>
    <ligand>
        <name>ATP</name>
        <dbReference type="ChEBI" id="CHEBI:30616"/>
    </ligand>
</feature>
<feature type="binding site" evidence="1">
    <location>
        <position position="86"/>
    </location>
    <ligand>
        <name>L-citrulline</name>
        <dbReference type="ChEBI" id="CHEBI:57743"/>
    </ligand>
</feature>
<feature type="binding site" evidence="1">
    <location>
        <position position="116"/>
    </location>
    <ligand>
        <name>ATP</name>
        <dbReference type="ChEBI" id="CHEBI:30616"/>
    </ligand>
</feature>
<feature type="binding site" evidence="1">
    <location>
        <position position="118"/>
    </location>
    <ligand>
        <name>L-aspartate</name>
        <dbReference type="ChEBI" id="CHEBI:29991"/>
    </ligand>
</feature>
<feature type="binding site" evidence="1">
    <location>
        <position position="122"/>
    </location>
    <ligand>
        <name>L-aspartate</name>
        <dbReference type="ChEBI" id="CHEBI:29991"/>
    </ligand>
</feature>
<feature type="binding site" evidence="1">
    <location>
        <position position="122"/>
    </location>
    <ligand>
        <name>L-citrulline</name>
        <dbReference type="ChEBI" id="CHEBI:57743"/>
    </ligand>
</feature>
<feature type="binding site" evidence="1">
    <location>
        <position position="123"/>
    </location>
    <ligand>
        <name>L-aspartate</name>
        <dbReference type="ChEBI" id="CHEBI:29991"/>
    </ligand>
</feature>
<feature type="binding site" evidence="1">
    <location>
        <position position="126"/>
    </location>
    <ligand>
        <name>L-citrulline</name>
        <dbReference type="ChEBI" id="CHEBI:57743"/>
    </ligand>
</feature>
<feature type="binding site" evidence="1">
    <location>
        <position position="174"/>
    </location>
    <ligand>
        <name>L-citrulline</name>
        <dbReference type="ChEBI" id="CHEBI:57743"/>
    </ligand>
</feature>
<feature type="binding site" evidence="1">
    <location>
        <position position="183"/>
    </location>
    <ligand>
        <name>L-citrulline</name>
        <dbReference type="ChEBI" id="CHEBI:57743"/>
    </ligand>
</feature>
<feature type="binding site" evidence="1">
    <location>
        <position position="259"/>
    </location>
    <ligand>
        <name>L-citrulline</name>
        <dbReference type="ChEBI" id="CHEBI:57743"/>
    </ligand>
</feature>
<feature type="binding site" evidence="1">
    <location>
        <position position="271"/>
    </location>
    <ligand>
        <name>L-citrulline</name>
        <dbReference type="ChEBI" id="CHEBI:57743"/>
    </ligand>
</feature>
<protein>
    <recommendedName>
        <fullName evidence="1">Argininosuccinate synthase</fullName>
        <ecNumber evidence="1">6.3.4.5</ecNumber>
    </recommendedName>
    <alternativeName>
        <fullName evidence="1">Citrulline--aspartate ligase</fullName>
    </alternativeName>
</protein>
<organism>
    <name type="scientific">Geobacillus kaustophilus (strain HTA426)</name>
    <dbReference type="NCBI Taxonomy" id="235909"/>
    <lineage>
        <taxon>Bacteria</taxon>
        <taxon>Bacillati</taxon>
        <taxon>Bacillota</taxon>
        <taxon>Bacilli</taxon>
        <taxon>Bacillales</taxon>
        <taxon>Anoxybacillaceae</taxon>
        <taxon>Geobacillus</taxon>
        <taxon>Geobacillus thermoleovorans group</taxon>
    </lineage>
</organism>
<accession>Q5KW94</accession>
<dbReference type="EC" id="6.3.4.5" evidence="1"/>
<dbReference type="EMBL" id="BA000043">
    <property type="protein sequence ID" value="BAD77042.1"/>
    <property type="molecule type" value="Genomic_DNA"/>
</dbReference>
<dbReference type="RefSeq" id="WP_011232231.1">
    <property type="nucleotide sequence ID" value="NC_006510.1"/>
</dbReference>
<dbReference type="SMR" id="Q5KW94"/>
<dbReference type="STRING" id="235909.GK2757"/>
<dbReference type="KEGG" id="gka:GK2757"/>
<dbReference type="eggNOG" id="COG0137">
    <property type="taxonomic scope" value="Bacteria"/>
</dbReference>
<dbReference type="HOGENOM" id="CLU_032784_4_2_9"/>
<dbReference type="UniPathway" id="UPA00068">
    <property type="reaction ID" value="UER00113"/>
</dbReference>
<dbReference type="Proteomes" id="UP000001172">
    <property type="component" value="Chromosome"/>
</dbReference>
<dbReference type="GO" id="GO:0005737">
    <property type="term" value="C:cytoplasm"/>
    <property type="evidence" value="ECO:0007669"/>
    <property type="project" value="UniProtKB-SubCell"/>
</dbReference>
<dbReference type="GO" id="GO:0004055">
    <property type="term" value="F:argininosuccinate synthase activity"/>
    <property type="evidence" value="ECO:0007669"/>
    <property type="project" value="UniProtKB-UniRule"/>
</dbReference>
<dbReference type="GO" id="GO:0005524">
    <property type="term" value="F:ATP binding"/>
    <property type="evidence" value="ECO:0007669"/>
    <property type="project" value="UniProtKB-UniRule"/>
</dbReference>
<dbReference type="GO" id="GO:0000053">
    <property type="term" value="P:argininosuccinate metabolic process"/>
    <property type="evidence" value="ECO:0007669"/>
    <property type="project" value="TreeGrafter"/>
</dbReference>
<dbReference type="GO" id="GO:0006526">
    <property type="term" value="P:L-arginine biosynthetic process"/>
    <property type="evidence" value="ECO:0007669"/>
    <property type="project" value="UniProtKB-UniRule"/>
</dbReference>
<dbReference type="GO" id="GO:0000050">
    <property type="term" value="P:urea cycle"/>
    <property type="evidence" value="ECO:0007669"/>
    <property type="project" value="TreeGrafter"/>
</dbReference>
<dbReference type="CDD" id="cd01999">
    <property type="entry name" value="ASS"/>
    <property type="match status" value="1"/>
</dbReference>
<dbReference type="FunFam" id="1.20.5.470:FF:000002">
    <property type="entry name" value="Argininosuccinate synthase"/>
    <property type="match status" value="1"/>
</dbReference>
<dbReference type="FunFam" id="3.40.50.620:FF:000038">
    <property type="entry name" value="Argininosuccinate synthase"/>
    <property type="match status" value="1"/>
</dbReference>
<dbReference type="FunFam" id="3.90.1260.10:FF:000007">
    <property type="entry name" value="Argininosuccinate synthase"/>
    <property type="match status" value="1"/>
</dbReference>
<dbReference type="Gene3D" id="3.90.1260.10">
    <property type="entry name" value="Argininosuccinate synthetase, chain A, domain 2"/>
    <property type="match status" value="1"/>
</dbReference>
<dbReference type="Gene3D" id="3.40.50.620">
    <property type="entry name" value="HUPs"/>
    <property type="match status" value="1"/>
</dbReference>
<dbReference type="Gene3D" id="1.20.5.470">
    <property type="entry name" value="Single helix bin"/>
    <property type="match status" value="1"/>
</dbReference>
<dbReference type="HAMAP" id="MF_00005">
    <property type="entry name" value="Arg_succ_synth_type1"/>
    <property type="match status" value="1"/>
</dbReference>
<dbReference type="InterPro" id="IPR048268">
    <property type="entry name" value="Arginosuc_syn_C"/>
</dbReference>
<dbReference type="InterPro" id="IPR048267">
    <property type="entry name" value="Arginosuc_syn_N"/>
</dbReference>
<dbReference type="InterPro" id="IPR001518">
    <property type="entry name" value="Arginosuc_synth"/>
</dbReference>
<dbReference type="InterPro" id="IPR018223">
    <property type="entry name" value="Arginosuc_synth_CS"/>
</dbReference>
<dbReference type="InterPro" id="IPR023434">
    <property type="entry name" value="Arginosuc_synth_type_1_subfam"/>
</dbReference>
<dbReference type="InterPro" id="IPR024074">
    <property type="entry name" value="AS_cat/multimer_dom_body"/>
</dbReference>
<dbReference type="InterPro" id="IPR014729">
    <property type="entry name" value="Rossmann-like_a/b/a_fold"/>
</dbReference>
<dbReference type="NCBIfam" id="TIGR00032">
    <property type="entry name" value="argG"/>
    <property type="match status" value="1"/>
</dbReference>
<dbReference type="NCBIfam" id="NF001770">
    <property type="entry name" value="PRK00509.1"/>
    <property type="match status" value="1"/>
</dbReference>
<dbReference type="PANTHER" id="PTHR11587">
    <property type="entry name" value="ARGININOSUCCINATE SYNTHASE"/>
    <property type="match status" value="1"/>
</dbReference>
<dbReference type="PANTHER" id="PTHR11587:SF2">
    <property type="entry name" value="ARGININOSUCCINATE SYNTHASE"/>
    <property type="match status" value="1"/>
</dbReference>
<dbReference type="Pfam" id="PF20979">
    <property type="entry name" value="Arginosuc_syn_C"/>
    <property type="match status" value="1"/>
</dbReference>
<dbReference type="Pfam" id="PF00764">
    <property type="entry name" value="Arginosuc_synth"/>
    <property type="match status" value="1"/>
</dbReference>
<dbReference type="SUPFAM" id="SSF52402">
    <property type="entry name" value="Adenine nucleotide alpha hydrolases-like"/>
    <property type="match status" value="1"/>
</dbReference>
<dbReference type="SUPFAM" id="SSF69864">
    <property type="entry name" value="Argininosuccinate synthetase, C-terminal domain"/>
    <property type="match status" value="1"/>
</dbReference>
<dbReference type="PROSITE" id="PS00564">
    <property type="entry name" value="ARGININOSUCCIN_SYN_1"/>
    <property type="match status" value="1"/>
</dbReference>
<dbReference type="PROSITE" id="PS00565">
    <property type="entry name" value="ARGININOSUCCIN_SYN_2"/>
    <property type="match status" value="1"/>
</dbReference>
<proteinExistence type="inferred from homology"/>
<reference key="1">
    <citation type="journal article" date="2004" name="Nucleic Acids Res.">
        <title>Thermoadaptation trait revealed by the genome sequence of thermophilic Geobacillus kaustophilus.</title>
        <authorList>
            <person name="Takami H."/>
            <person name="Takaki Y."/>
            <person name="Chee G.-J."/>
            <person name="Nishi S."/>
            <person name="Shimamura S."/>
            <person name="Suzuki H."/>
            <person name="Matsui S."/>
            <person name="Uchiyama I."/>
        </authorList>
    </citation>
    <scope>NUCLEOTIDE SEQUENCE [LARGE SCALE GENOMIC DNA]</scope>
    <source>
        <strain>HTA426</strain>
    </source>
</reference>
<evidence type="ECO:0000255" key="1">
    <source>
        <dbReference type="HAMAP-Rule" id="MF_00005"/>
    </source>
</evidence>
<name>ASSY_GEOKA</name>
<sequence length="406" mass="44685">MANPKLVLAYSGGLDTSVAIKWLQERGYDVIACCLDLGEGKDLDFVKEKALKVGAMKSYVIDVKDEFANEYALIALQANALYEGKYPLVSALSRPLIAKKLVEIAELEGAVAVAHGCTGKGNDQVRFEVSIKALNPDLDVIAPVREWSWSREEEIEYAKKHGIPIPVDLDSPFSIDQNLWGRSNECGILEDPWAAPPEEAYELTASLENAPDVPDVIEIGFEQGVPVTLNGKAYPLAQLILELNALAGKHGVGRIDHVENRLVGIKSREVYECPGAITLIKAHKELEDLTLVREVAHFKPIIEQKIAEVIYNGLWFSPLKDALVAFLKETQKNVTGVVRVKLFKGHAIVEGRKSPFSLYDEKLATYTSEDEFDHQAAVGFISLYGLPTKVHSIVNKQNKASVPTGQ</sequence>